<evidence type="ECO:0000250" key="1"/>
<evidence type="ECO:0000305" key="2"/>
<proteinExistence type="evidence at transcript level"/>
<feature type="chain" id="PRO_0000235267" description="WD repeat domain-containing protein 83">
    <location>
        <begin position="1"/>
        <end position="314"/>
    </location>
</feature>
<feature type="repeat" description="WD 1">
    <location>
        <begin position="23"/>
        <end position="62"/>
    </location>
</feature>
<feature type="repeat" description="WD 2">
    <location>
        <begin position="65"/>
        <end position="104"/>
    </location>
</feature>
<feature type="repeat" description="WD 3">
    <location>
        <begin position="107"/>
        <end position="146"/>
    </location>
</feature>
<feature type="repeat" description="WD 4">
    <location>
        <begin position="151"/>
        <end position="188"/>
    </location>
</feature>
<feature type="repeat" description="WD 5">
    <location>
        <begin position="189"/>
        <end position="228"/>
    </location>
</feature>
<feature type="repeat" description="WD 6">
    <location>
        <begin position="231"/>
        <end position="272"/>
    </location>
</feature>
<feature type="repeat" description="WD 7">
    <location>
        <begin position="275"/>
        <end position="313"/>
    </location>
</feature>
<keyword id="KW-0963">Cytoplasm</keyword>
<keyword id="KW-1185">Reference proteome</keyword>
<keyword id="KW-0677">Repeat</keyword>
<keyword id="KW-0853">WD repeat</keyword>
<organism>
    <name type="scientific">Xenopus laevis</name>
    <name type="common">African clawed frog</name>
    <dbReference type="NCBI Taxonomy" id="8355"/>
    <lineage>
        <taxon>Eukaryota</taxon>
        <taxon>Metazoa</taxon>
        <taxon>Chordata</taxon>
        <taxon>Craniata</taxon>
        <taxon>Vertebrata</taxon>
        <taxon>Euteleostomi</taxon>
        <taxon>Amphibia</taxon>
        <taxon>Batrachia</taxon>
        <taxon>Anura</taxon>
        <taxon>Pipoidea</taxon>
        <taxon>Pipidae</taxon>
        <taxon>Xenopodinae</taxon>
        <taxon>Xenopus</taxon>
        <taxon>Xenopus</taxon>
    </lineage>
</organism>
<comment type="function">
    <text evidence="1">Molecular scaffold protein for various multimeric protein complexes. Acts as a module in the assembly of a multicomponent scaffold for the ERK pathway, linking ERK responses to specific agonists. Also involved in response to hypoxia by acting as a negative regulator of HIF1A/HIF-1-alpha (By similarity).</text>
</comment>
<comment type="subcellular location">
    <subcellularLocation>
        <location evidence="1">Cytoplasm</location>
    </subcellularLocation>
</comment>
<comment type="similarity">
    <text evidence="2">Belongs to the WD repeat MORG1 family.</text>
</comment>
<accession>Q3KQ62</accession>
<dbReference type="EMBL" id="BC106371">
    <property type="protein sequence ID" value="AAI06372.1"/>
    <property type="molecule type" value="mRNA"/>
</dbReference>
<dbReference type="RefSeq" id="NP_001089704.1">
    <property type="nucleotide sequence ID" value="NM_001096235.1"/>
</dbReference>
<dbReference type="RefSeq" id="XP_018106740.1">
    <property type="nucleotide sequence ID" value="XM_018251251.1"/>
</dbReference>
<dbReference type="SMR" id="Q3KQ62"/>
<dbReference type="BioGRID" id="592548">
    <property type="interactions" value="1"/>
</dbReference>
<dbReference type="IntAct" id="Q3KQ62">
    <property type="interactions" value="1"/>
</dbReference>
<dbReference type="DNASU" id="734767"/>
<dbReference type="GeneID" id="734767"/>
<dbReference type="KEGG" id="xla:734767"/>
<dbReference type="AGR" id="Xenbase:XB-GENE-969402"/>
<dbReference type="CTD" id="734767"/>
<dbReference type="Xenbase" id="XB-GENE-969402">
    <property type="gene designation" value="wdr83.L"/>
</dbReference>
<dbReference type="OMA" id="MCWDIRT"/>
<dbReference type="OrthoDB" id="71437at2759"/>
<dbReference type="Proteomes" id="UP000186698">
    <property type="component" value="Chromosome 3L"/>
</dbReference>
<dbReference type="Bgee" id="734767">
    <property type="expression patterns" value="Expressed in oocyte and 19 other cell types or tissues"/>
</dbReference>
<dbReference type="GO" id="GO:0071013">
    <property type="term" value="C:catalytic step 2 spliceosome"/>
    <property type="evidence" value="ECO:0000318"/>
    <property type="project" value="GO_Central"/>
</dbReference>
<dbReference type="GO" id="GO:0005737">
    <property type="term" value="C:cytoplasm"/>
    <property type="evidence" value="ECO:0007669"/>
    <property type="project" value="UniProtKB-SubCell"/>
</dbReference>
<dbReference type="GO" id="GO:0000398">
    <property type="term" value="P:mRNA splicing, via spliceosome"/>
    <property type="evidence" value="ECO:0000318"/>
    <property type="project" value="GO_Central"/>
</dbReference>
<dbReference type="CDD" id="cd00200">
    <property type="entry name" value="WD40"/>
    <property type="match status" value="1"/>
</dbReference>
<dbReference type="FunFam" id="2.130.10.10:FF:000273">
    <property type="entry name" value="WD repeat domain-containing protein 83"/>
    <property type="match status" value="1"/>
</dbReference>
<dbReference type="Gene3D" id="2.130.10.10">
    <property type="entry name" value="YVTN repeat-like/Quinoprotein amine dehydrogenase"/>
    <property type="match status" value="1"/>
</dbReference>
<dbReference type="InterPro" id="IPR020472">
    <property type="entry name" value="G-protein_beta_WD-40_rep"/>
</dbReference>
<dbReference type="InterPro" id="IPR015943">
    <property type="entry name" value="WD40/YVTN_repeat-like_dom_sf"/>
</dbReference>
<dbReference type="InterPro" id="IPR019775">
    <property type="entry name" value="WD40_repeat_CS"/>
</dbReference>
<dbReference type="InterPro" id="IPR036322">
    <property type="entry name" value="WD40_repeat_dom_sf"/>
</dbReference>
<dbReference type="InterPro" id="IPR001680">
    <property type="entry name" value="WD40_rpt"/>
</dbReference>
<dbReference type="InterPro" id="IPR051980">
    <property type="entry name" value="WD_repeat_MORG1"/>
</dbReference>
<dbReference type="PANTHER" id="PTHR22842:SF3">
    <property type="entry name" value="WD REPEAT DOMAIN-CONTAINING PROTEIN 83"/>
    <property type="match status" value="1"/>
</dbReference>
<dbReference type="PANTHER" id="PTHR22842">
    <property type="entry name" value="WD40 REPEAT PROTEIN"/>
    <property type="match status" value="1"/>
</dbReference>
<dbReference type="Pfam" id="PF00400">
    <property type="entry name" value="WD40"/>
    <property type="match status" value="6"/>
</dbReference>
<dbReference type="PIRSF" id="PIRSF002394">
    <property type="entry name" value="GN-bd_beta"/>
    <property type="match status" value="1"/>
</dbReference>
<dbReference type="PRINTS" id="PR00320">
    <property type="entry name" value="GPROTEINBRPT"/>
</dbReference>
<dbReference type="SMART" id="SM00320">
    <property type="entry name" value="WD40"/>
    <property type="match status" value="7"/>
</dbReference>
<dbReference type="SUPFAM" id="SSF50978">
    <property type="entry name" value="WD40 repeat-like"/>
    <property type="match status" value="1"/>
</dbReference>
<dbReference type="PROSITE" id="PS00678">
    <property type="entry name" value="WD_REPEATS_1"/>
    <property type="match status" value="2"/>
</dbReference>
<dbReference type="PROSITE" id="PS50082">
    <property type="entry name" value="WD_REPEATS_2"/>
    <property type="match status" value="3"/>
</dbReference>
<dbReference type="PROSITE" id="PS50294">
    <property type="entry name" value="WD_REPEATS_REGION"/>
    <property type="match status" value="1"/>
</dbReference>
<sequence>MSFPAPKPKAPELPQKLQHKLECNQGAVRAVRFNVDGNYCMTCGSDKSLKLWNPHKGSLLKTYSGHGYEVLDTAGSCDNSQLCSCSSDKTVILWDVAQGQVVRKFRGHAGKVNCVQFNEEATVIISGSIDSSIRCWDCRSRRPDAIQIMDEAKDGISSVKVSAHEILAGSVDGNLRRYDLRKGEMCADYLGSPITCVSFSQDSQCLLASSLDSTLRLLDKDTGELLGEYTGHQNLSYKLDSCLSEKDTHVLSCSEDGTVCFWDLVEGSLVLKLPVGKAVVQSLSFHPTECCLLTASEGGVQVWRGASYEEEGGS</sequence>
<gene>
    <name type="primary">wdr83</name>
    <name type="synonym">morg1</name>
</gene>
<reference key="1">
    <citation type="submission" date="2005-10" db="EMBL/GenBank/DDBJ databases">
        <authorList>
            <consortium name="NIH - Xenopus Gene Collection (XGC) project"/>
        </authorList>
    </citation>
    <scope>NUCLEOTIDE SEQUENCE [LARGE SCALE MRNA]</scope>
    <source>
        <tissue>Testis</tissue>
    </source>
</reference>
<protein>
    <recommendedName>
        <fullName>WD repeat domain-containing protein 83</fullName>
    </recommendedName>
    <alternativeName>
        <fullName>Mitogen-activated protein kinase organizer 1</fullName>
        <shortName>MAPK organizer 1</shortName>
    </alternativeName>
</protein>
<name>WDR83_XENLA</name>